<evidence type="ECO:0000250" key="1">
    <source>
        <dbReference type="UniProtKB" id="P11172"/>
    </source>
</evidence>
<evidence type="ECO:0000305" key="2"/>
<organism>
    <name type="scientific">Bos taurus</name>
    <name type="common">Bovine</name>
    <dbReference type="NCBI Taxonomy" id="9913"/>
    <lineage>
        <taxon>Eukaryota</taxon>
        <taxon>Metazoa</taxon>
        <taxon>Chordata</taxon>
        <taxon>Craniata</taxon>
        <taxon>Vertebrata</taxon>
        <taxon>Euteleostomi</taxon>
        <taxon>Mammalia</taxon>
        <taxon>Eutheria</taxon>
        <taxon>Laurasiatheria</taxon>
        <taxon>Artiodactyla</taxon>
        <taxon>Ruminantia</taxon>
        <taxon>Pecora</taxon>
        <taxon>Bovidae</taxon>
        <taxon>Bovinae</taxon>
        <taxon>Bos</taxon>
    </lineage>
</organism>
<keyword id="KW-0007">Acetylation</keyword>
<keyword id="KW-0210">Decarboxylase</keyword>
<keyword id="KW-0328">Glycosyltransferase</keyword>
<keyword id="KW-0456">Lyase</keyword>
<keyword id="KW-0511">Multifunctional enzyme</keyword>
<keyword id="KW-0597">Phosphoprotein</keyword>
<keyword id="KW-0665">Pyrimidine biosynthesis</keyword>
<keyword id="KW-1185">Reference proteome</keyword>
<keyword id="KW-0808">Transferase</keyword>
<gene>
    <name type="primary">UMPS</name>
</gene>
<reference key="1">
    <citation type="journal article" date="1993" name="Gene">
        <title>Sequence of the cDNA encoding bovine uridine monophosphate synthase.</title>
        <authorList>
            <person name="Schoeber S."/>
            <person name="Detlef S."/>
            <person name="Schwenger B."/>
        </authorList>
    </citation>
    <scope>NUCLEOTIDE SEQUENCE [MRNA]</scope>
    <source>
        <tissue>Liver</tissue>
    </source>
</reference>
<reference key="2">
    <citation type="journal article" date="1993" name="Genomics">
        <title>DUMPS cattle carry a point mutation in the uridine monophosphate synthase gene.</title>
        <authorList>
            <person name="Schwenger B."/>
            <person name="Schoeber S."/>
            <person name="Simon D."/>
        </authorList>
    </citation>
    <scope>NUCLEOTIDE SEQUENCE [MRNA]</scope>
</reference>
<reference key="3">
    <citation type="submission" date="2006-01" db="EMBL/GenBank/DDBJ databases">
        <authorList>
            <consortium name="NIH - Mammalian Gene Collection (MGC) project"/>
        </authorList>
    </citation>
    <scope>NUCLEOTIDE SEQUENCE [LARGE SCALE MRNA]</scope>
    <source>
        <strain>Hereford</strain>
        <tissue>Heart ventricle</tissue>
    </source>
</reference>
<accession>P31754</accession>
<accession>Q2KHV1</accession>
<feature type="initiator methionine" description="Removed" evidence="1">
    <location>
        <position position="1"/>
    </location>
</feature>
<feature type="chain" id="PRO_0000139648" description="Uridine 5'-monophosphate synthase">
    <location>
        <begin position="2"/>
        <end position="480"/>
    </location>
</feature>
<feature type="region of interest" description="OPRTase">
    <location>
        <begin position="2"/>
        <end position="214"/>
    </location>
</feature>
<feature type="region of interest" description="Domain linker">
    <location>
        <begin position="215"/>
        <end position="220"/>
    </location>
</feature>
<feature type="region of interest" description="OMPdecase">
    <location>
        <begin position="221"/>
        <end position="480"/>
    </location>
</feature>
<feature type="active site" description="For OMPdecase activity" evidence="1">
    <location>
        <position position="314"/>
    </location>
</feature>
<feature type="active site" description="For OMPdecase activity" evidence="1">
    <location>
        <position position="317"/>
    </location>
</feature>
<feature type="binding site" evidence="1">
    <location>
        <position position="257"/>
    </location>
    <ligand>
        <name>orotidine 5'-phosphate</name>
        <dbReference type="ChEBI" id="CHEBI:57538"/>
    </ligand>
</feature>
<feature type="binding site" evidence="1">
    <location>
        <position position="257"/>
    </location>
    <ligand>
        <name>UMP</name>
        <dbReference type="ChEBI" id="CHEBI:57865"/>
    </ligand>
</feature>
<feature type="binding site" evidence="1">
    <location>
        <position position="259"/>
    </location>
    <ligand>
        <name>UMP</name>
        <dbReference type="ChEBI" id="CHEBI:57865"/>
    </ligand>
</feature>
<feature type="binding site" evidence="1">
    <location>
        <begin position="281"/>
        <end position="283"/>
    </location>
    <ligand>
        <name>UMP</name>
        <dbReference type="ChEBI" id="CHEBI:57865"/>
    </ligand>
</feature>
<feature type="binding site" evidence="1">
    <location>
        <position position="281"/>
    </location>
    <ligand>
        <name>orotidine 5'-phosphate</name>
        <dbReference type="ChEBI" id="CHEBI:57538"/>
    </ligand>
</feature>
<feature type="binding site" evidence="1">
    <location>
        <position position="314"/>
    </location>
    <ligand>
        <name>orotidine 5'-phosphate</name>
        <dbReference type="ChEBI" id="CHEBI:57538"/>
    </ligand>
</feature>
<feature type="binding site" evidence="1">
    <location>
        <position position="317"/>
    </location>
    <ligand>
        <name>orotidine 5'-phosphate</name>
        <dbReference type="ChEBI" id="CHEBI:57538"/>
    </ligand>
</feature>
<feature type="binding site" evidence="1">
    <location>
        <position position="317"/>
    </location>
    <ligand>
        <name>UMP</name>
        <dbReference type="ChEBI" id="CHEBI:57865"/>
    </ligand>
</feature>
<feature type="binding site" evidence="1">
    <location>
        <position position="321"/>
    </location>
    <ligand>
        <name>orotidine 5'-phosphate</name>
        <dbReference type="ChEBI" id="CHEBI:57538"/>
    </ligand>
</feature>
<feature type="binding site" evidence="1">
    <location>
        <position position="321"/>
    </location>
    <ligand>
        <name>UMP</name>
        <dbReference type="ChEBI" id="CHEBI:57865"/>
    </ligand>
</feature>
<feature type="binding site" evidence="1">
    <location>
        <position position="372"/>
    </location>
    <ligand>
        <name>orotidine 5'-phosphate</name>
        <dbReference type="ChEBI" id="CHEBI:57538"/>
    </ligand>
</feature>
<feature type="binding site" evidence="1">
    <location>
        <position position="372"/>
    </location>
    <ligand>
        <name>UMP</name>
        <dbReference type="ChEBI" id="CHEBI:57865"/>
    </ligand>
</feature>
<feature type="binding site" evidence="1">
    <location>
        <begin position="430"/>
        <end position="432"/>
    </location>
    <ligand>
        <name>orotidine 5'-phosphate</name>
        <dbReference type="ChEBI" id="CHEBI:57538"/>
    </ligand>
</feature>
<feature type="binding site" evidence="1">
    <location>
        <begin position="430"/>
        <end position="432"/>
    </location>
    <ligand>
        <name>UMP</name>
        <dbReference type="ChEBI" id="CHEBI:57865"/>
    </ligand>
</feature>
<feature type="binding site" evidence="1">
    <location>
        <begin position="450"/>
        <end position="451"/>
    </location>
    <ligand>
        <name>orotidine 5'-phosphate</name>
        <dbReference type="ChEBI" id="CHEBI:57538"/>
    </ligand>
</feature>
<feature type="binding site" evidence="1">
    <location>
        <begin position="450"/>
        <end position="451"/>
    </location>
    <ligand>
        <name>UMP</name>
        <dbReference type="ChEBI" id="CHEBI:57865"/>
    </ligand>
</feature>
<feature type="modified residue" description="N-acetylalanine" evidence="1">
    <location>
        <position position="2"/>
    </location>
</feature>
<feature type="modified residue" description="Phosphotyrosine" evidence="1">
    <location>
        <position position="37"/>
    </location>
</feature>
<feature type="modified residue" description="Phosphoserine" evidence="1">
    <location>
        <position position="214"/>
    </location>
</feature>
<feature type="sequence conflict" description="In Ref. 3; AAI12873." evidence="2" ref="3">
    <original>C</original>
    <variation>R</variation>
    <location>
        <position position="181"/>
    </location>
</feature>
<proteinExistence type="evidence at transcript level"/>
<name>UMPS_BOVIN</name>
<sequence>MAAADALLGSLVTGLYDVQAFKFGNFVLKSGLSSPVYIDLRGIISRPSILNQVAEMLFQTAENAEINFDTVCGVPYTALPLATIVCSTHEIPMLIRRKEKKDYGTKRLIEGAVNPGDTCLIIEDVVSSGSSVWETAEVLQKEGLKVTDAVVLVDREQGGRDNLQARGIRLHSVCTLSTVLCILEQQKKINAETVERVKRFIQENAFVAANPNDSLPSVKKEPKELSFGARAELPGTHPVAAKLLRLMQKKETNLCLSADVSESRELLQLADALGSRICLLKIHVDILNDFTLDVMKELTTLAKRHEFLIFEDRKFADIGNTVKKQYEGGVFKIASWADLVNAHAVPGSGVVKGLEEVGLPLHRACLLVAEMSSAGTLATGSYTEAAVQMAEEHSEFVIGFISGSRVSMKPEFLHLTPGVQLEAGGDNLGQQYHSPQEVIGKRGSDIIIVGRGIIASANQLEAAKMYRKAAWEAYLSRLAV</sequence>
<dbReference type="EC" id="2.4.2.10" evidence="1"/>
<dbReference type="EC" id="4.1.1.23" evidence="1"/>
<dbReference type="EMBL" id="X65125">
    <property type="protein sequence ID" value="CAA46253.1"/>
    <property type="molecule type" value="mRNA"/>
</dbReference>
<dbReference type="EMBL" id="BC112872">
    <property type="protein sequence ID" value="AAI12873.1"/>
    <property type="molecule type" value="mRNA"/>
</dbReference>
<dbReference type="PIR" id="JN0558">
    <property type="entry name" value="JN0558"/>
</dbReference>
<dbReference type="RefSeq" id="NP_803474.1">
    <property type="nucleotide sequence ID" value="NM_177508.1"/>
</dbReference>
<dbReference type="SMR" id="P31754"/>
<dbReference type="FunCoup" id="P31754">
    <property type="interactions" value="3779"/>
</dbReference>
<dbReference type="STRING" id="9913.ENSBTAP00000018248"/>
<dbReference type="PaxDb" id="9913-ENSBTAP00000018248"/>
<dbReference type="GeneID" id="281568"/>
<dbReference type="KEGG" id="bta:281568"/>
<dbReference type="CTD" id="7372"/>
<dbReference type="eggNOG" id="KOG1377">
    <property type="taxonomic scope" value="Eukaryota"/>
</dbReference>
<dbReference type="HOGENOM" id="CLU_049275_1_0_1"/>
<dbReference type="InParanoid" id="P31754"/>
<dbReference type="OrthoDB" id="10263753at2759"/>
<dbReference type="TreeFam" id="TF314694"/>
<dbReference type="UniPathway" id="UPA00070">
    <property type="reaction ID" value="UER00119"/>
</dbReference>
<dbReference type="UniPathway" id="UPA00070">
    <property type="reaction ID" value="UER00120"/>
</dbReference>
<dbReference type="Proteomes" id="UP000009136">
    <property type="component" value="Unplaced"/>
</dbReference>
<dbReference type="GO" id="GO:0004588">
    <property type="term" value="F:orotate phosphoribosyltransferase activity"/>
    <property type="evidence" value="ECO:0000250"/>
    <property type="project" value="UniProtKB"/>
</dbReference>
<dbReference type="GO" id="GO:0004590">
    <property type="term" value="F:orotidine-5'-phosphate decarboxylase activity"/>
    <property type="evidence" value="ECO:0000250"/>
    <property type="project" value="UniProtKB"/>
</dbReference>
<dbReference type="GO" id="GO:0006207">
    <property type="term" value="P:'de novo' pyrimidine nucleobase biosynthetic process"/>
    <property type="evidence" value="ECO:0007669"/>
    <property type="project" value="InterPro"/>
</dbReference>
<dbReference type="GO" id="GO:0044205">
    <property type="term" value="P:'de novo' UMP biosynthetic process"/>
    <property type="evidence" value="ECO:0007669"/>
    <property type="project" value="UniProtKB-UniPathway"/>
</dbReference>
<dbReference type="GO" id="GO:0019856">
    <property type="term" value="P:pyrimidine nucleobase biosynthetic process"/>
    <property type="evidence" value="ECO:0000318"/>
    <property type="project" value="GO_Central"/>
</dbReference>
<dbReference type="GO" id="GO:0006222">
    <property type="term" value="P:UMP biosynthetic process"/>
    <property type="evidence" value="ECO:0000250"/>
    <property type="project" value="UniProtKB"/>
</dbReference>
<dbReference type="CDD" id="cd04725">
    <property type="entry name" value="OMP_decarboxylase_like"/>
    <property type="match status" value="1"/>
</dbReference>
<dbReference type="CDD" id="cd06223">
    <property type="entry name" value="PRTases_typeI"/>
    <property type="match status" value="1"/>
</dbReference>
<dbReference type="FunFam" id="3.20.20.70:FF:000092">
    <property type="entry name" value="Uridine monophosphate synthetase"/>
    <property type="match status" value="1"/>
</dbReference>
<dbReference type="FunFam" id="3.40.50.2020:FF:000025">
    <property type="entry name" value="Uridine monophosphate synthetase"/>
    <property type="match status" value="1"/>
</dbReference>
<dbReference type="Gene3D" id="3.40.50.2020">
    <property type="match status" value="1"/>
</dbReference>
<dbReference type="Gene3D" id="3.20.20.70">
    <property type="entry name" value="Aldolase class I"/>
    <property type="match status" value="1"/>
</dbReference>
<dbReference type="HAMAP" id="MF_01208">
    <property type="entry name" value="PyrE"/>
    <property type="match status" value="1"/>
</dbReference>
<dbReference type="InterPro" id="IPR013785">
    <property type="entry name" value="Aldolase_TIM"/>
</dbReference>
<dbReference type="InterPro" id="IPR014732">
    <property type="entry name" value="OMPdecase"/>
</dbReference>
<dbReference type="InterPro" id="IPR018089">
    <property type="entry name" value="OMPdecase_AS"/>
</dbReference>
<dbReference type="InterPro" id="IPR001754">
    <property type="entry name" value="OMPdeCOase_dom"/>
</dbReference>
<dbReference type="InterPro" id="IPR023031">
    <property type="entry name" value="OPRT"/>
</dbReference>
<dbReference type="InterPro" id="IPR004467">
    <property type="entry name" value="Or_phspho_trans_dom"/>
</dbReference>
<dbReference type="InterPro" id="IPR000836">
    <property type="entry name" value="PRibTrfase_dom"/>
</dbReference>
<dbReference type="InterPro" id="IPR029057">
    <property type="entry name" value="PRTase-like"/>
</dbReference>
<dbReference type="InterPro" id="IPR011060">
    <property type="entry name" value="RibuloseP-bd_barrel"/>
</dbReference>
<dbReference type="NCBIfam" id="NF010382">
    <property type="entry name" value="PRK13809.1"/>
    <property type="match status" value="1"/>
</dbReference>
<dbReference type="NCBIfam" id="TIGR00336">
    <property type="entry name" value="pyrE"/>
    <property type="match status" value="1"/>
</dbReference>
<dbReference type="NCBIfam" id="TIGR01740">
    <property type="entry name" value="pyrF"/>
    <property type="match status" value="1"/>
</dbReference>
<dbReference type="PANTHER" id="PTHR19278">
    <property type="entry name" value="OROTATE PHOSPHORIBOSYLTRANSFERASE"/>
    <property type="match status" value="1"/>
</dbReference>
<dbReference type="PANTHER" id="PTHR19278:SF9">
    <property type="entry name" value="URIDINE 5'-MONOPHOSPHATE SYNTHASE"/>
    <property type="match status" value="1"/>
</dbReference>
<dbReference type="Pfam" id="PF00215">
    <property type="entry name" value="OMPdecase"/>
    <property type="match status" value="1"/>
</dbReference>
<dbReference type="Pfam" id="PF00156">
    <property type="entry name" value="Pribosyltran"/>
    <property type="match status" value="1"/>
</dbReference>
<dbReference type="SMART" id="SM00934">
    <property type="entry name" value="OMPdecase"/>
    <property type="match status" value="1"/>
</dbReference>
<dbReference type="SUPFAM" id="SSF53271">
    <property type="entry name" value="PRTase-like"/>
    <property type="match status" value="1"/>
</dbReference>
<dbReference type="SUPFAM" id="SSF51366">
    <property type="entry name" value="Ribulose-phoshate binding barrel"/>
    <property type="match status" value="1"/>
</dbReference>
<dbReference type="PROSITE" id="PS00156">
    <property type="entry name" value="OMPDECASE"/>
    <property type="match status" value="1"/>
</dbReference>
<dbReference type="PROSITE" id="PS00103">
    <property type="entry name" value="PUR_PYR_PR_TRANSFER"/>
    <property type="match status" value="1"/>
</dbReference>
<protein>
    <recommendedName>
        <fullName>Uridine 5'-monophosphate synthase</fullName>
        <shortName>UMP synthase</shortName>
    </recommendedName>
    <domain>
        <recommendedName>
            <fullName>Orotate phosphoribosyltransferase</fullName>
            <shortName>OPRTase</shortName>
            <ecNumber evidence="1">2.4.2.10</ecNumber>
        </recommendedName>
    </domain>
    <domain>
        <recommendedName>
            <fullName>Orotidine 5'-phosphate decarboxylase</fullName>
            <ecNumber evidence="1">4.1.1.23</ecNumber>
        </recommendedName>
        <alternativeName>
            <fullName>OMPdecase</fullName>
        </alternativeName>
    </domain>
</protein>
<comment type="function">
    <text evidence="1">Bifunctional enzyme catalyzing the last two steps of de novo pyrimidine biosynthesis, orotate phosphoribosyltransferase (OPRT), which converts orotate to orotidine-5'-monophosphate (OMP), and orotidine-5'-monophosphate decarboxylase (ODC), the terminal enzymatic reaction that decarboxylates OMP to uridine monophosphate (UMP).</text>
</comment>
<comment type="catalytic activity">
    <reaction evidence="1">
        <text>orotidine 5'-phosphate + diphosphate = orotate + 5-phospho-alpha-D-ribose 1-diphosphate</text>
        <dbReference type="Rhea" id="RHEA:10380"/>
        <dbReference type="ChEBI" id="CHEBI:30839"/>
        <dbReference type="ChEBI" id="CHEBI:33019"/>
        <dbReference type="ChEBI" id="CHEBI:57538"/>
        <dbReference type="ChEBI" id="CHEBI:58017"/>
        <dbReference type="EC" id="2.4.2.10"/>
    </reaction>
    <physiologicalReaction direction="right-to-left" evidence="1">
        <dbReference type="Rhea" id="RHEA:10382"/>
    </physiologicalReaction>
</comment>
<comment type="catalytic activity">
    <reaction evidence="1">
        <text>orotidine 5'-phosphate + H(+) = UMP + CO2</text>
        <dbReference type="Rhea" id="RHEA:11596"/>
        <dbReference type="ChEBI" id="CHEBI:15378"/>
        <dbReference type="ChEBI" id="CHEBI:16526"/>
        <dbReference type="ChEBI" id="CHEBI:57538"/>
        <dbReference type="ChEBI" id="CHEBI:57865"/>
        <dbReference type="EC" id="4.1.1.23"/>
    </reaction>
    <physiologicalReaction direction="left-to-right" evidence="1">
        <dbReference type="Rhea" id="RHEA:11597"/>
    </physiologicalReaction>
</comment>
<comment type="pathway">
    <text evidence="1">Pyrimidine metabolism; UMP biosynthesis via de novo pathway; UMP from orotate: step 1/2.</text>
</comment>
<comment type="pathway">
    <text evidence="1">Pyrimidine metabolism; UMP biosynthesis via de novo pathway; UMP from orotate: step 2/2.</text>
</comment>
<comment type="subunit">
    <text evidence="1">Homodimer; dimerization is required for enzymatic activity.</text>
</comment>
<comment type="similarity">
    <text evidence="2">In the N-terminal section; belongs to the purine/pyrimidine phosphoribosyltransferase family.</text>
</comment>
<comment type="similarity">
    <text evidence="2">In the C-terminal section; belongs to the OMP decarboxylase family.</text>
</comment>